<accession>Q8ZLA1</accession>
<protein>
    <recommendedName>
        <fullName evidence="1">Glyoxylate/hydroxypyruvate reductase B</fullName>
        <ecNumber evidence="1">1.1.1.79</ecNumber>
        <ecNumber evidence="1">1.1.1.81</ecNumber>
    </recommendedName>
</protein>
<organism>
    <name type="scientific">Salmonella typhimurium (strain LT2 / SGSC1412 / ATCC 700720)</name>
    <dbReference type="NCBI Taxonomy" id="99287"/>
    <lineage>
        <taxon>Bacteria</taxon>
        <taxon>Pseudomonadati</taxon>
        <taxon>Pseudomonadota</taxon>
        <taxon>Gammaproteobacteria</taxon>
        <taxon>Enterobacterales</taxon>
        <taxon>Enterobacteriaceae</taxon>
        <taxon>Salmonella</taxon>
    </lineage>
</organism>
<proteinExistence type="inferred from homology"/>
<dbReference type="EC" id="1.1.1.79" evidence="1"/>
<dbReference type="EC" id="1.1.1.81" evidence="1"/>
<dbReference type="EMBL" id="AE006468">
    <property type="protein sequence ID" value="AAL22506.1"/>
    <property type="molecule type" value="Genomic_DNA"/>
</dbReference>
<dbReference type="RefSeq" id="WP_000804674.1">
    <property type="nucleotide sequence ID" value="NC_003197.2"/>
</dbReference>
<dbReference type="SMR" id="Q8ZLA1"/>
<dbReference type="STRING" id="99287.STM3646"/>
<dbReference type="PaxDb" id="99287-STM3646"/>
<dbReference type="KEGG" id="stm:STM3646"/>
<dbReference type="PATRIC" id="fig|99287.12.peg.3856"/>
<dbReference type="HOGENOM" id="CLU_019796_1_2_6"/>
<dbReference type="OMA" id="PHIAWAY"/>
<dbReference type="PhylomeDB" id="Q8ZLA1"/>
<dbReference type="BioCyc" id="SENT99287:STM3646-MONOMER"/>
<dbReference type="Proteomes" id="UP000001014">
    <property type="component" value="Chromosome"/>
</dbReference>
<dbReference type="GO" id="GO:0005829">
    <property type="term" value="C:cytosol"/>
    <property type="evidence" value="ECO:0000318"/>
    <property type="project" value="GO_Central"/>
</dbReference>
<dbReference type="GO" id="GO:0005886">
    <property type="term" value="C:plasma membrane"/>
    <property type="evidence" value="ECO:0007669"/>
    <property type="project" value="UniProtKB-UniRule"/>
</dbReference>
<dbReference type="GO" id="GO:0030267">
    <property type="term" value="F:glyoxylate reductase (NADPH) activity"/>
    <property type="evidence" value="ECO:0000318"/>
    <property type="project" value="GO_Central"/>
</dbReference>
<dbReference type="GO" id="GO:0008465">
    <property type="term" value="F:hydroxypyruvate reductase (NADH) activity"/>
    <property type="evidence" value="ECO:0007669"/>
    <property type="project" value="RHEA"/>
</dbReference>
<dbReference type="GO" id="GO:0120509">
    <property type="term" value="F:hydroxypyruvate reductase (NADPH) activity"/>
    <property type="evidence" value="ECO:0007669"/>
    <property type="project" value="RHEA"/>
</dbReference>
<dbReference type="GO" id="GO:0016618">
    <property type="term" value="F:hydroxypyruvate reductase [NAD(P)H] activity"/>
    <property type="evidence" value="ECO:0000318"/>
    <property type="project" value="GO_Central"/>
</dbReference>
<dbReference type="GO" id="GO:0051287">
    <property type="term" value="F:NAD binding"/>
    <property type="evidence" value="ECO:0007669"/>
    <property type="project" value="InterPro"/>
</dbReference>
<dbReference type="CDD" id="cd05301">
    <property type="entry name" value="GDH"/>
    <property type="match status" value="1"/>
</dbReference>
<dbReference type="FunFam" id="3.40.50.720:FF:000026">
    <property type="entry name" value="Glyoxylate/hydroxypyruvate reductase B"/>
    <property type="match status" value="1"/>
</dbReference>
<dbReference type="Gene3D" id="3.40.50.720">
    <property type="entry name" value="NAD(P)-binding Rossmann-like Domain"/>
    <property type="match status" value="2"/>
</dbReference>
<dbReference type="HAMAP" id="MF_01667">
    <property type="entry name" value="2_Hacid_dh_C_GhrB"/>
    <property type="match status" value="1"/>
</dbReference>
<dbReference type="InterPro" id="IPR050223">
    <property type="entry name" value="D-isomer_2-hydroxyacid_DH"/>
</dbReference>
<dbReference type="InterPro" id="IPR006139">
    <property type="entry name" value="D-isomer_2_OHA_DH_cat_dom"/>
</dbReference>
<dbReference type="InterPro" id="IPR029753">
    <property type="entry name" value="D-isomer_DH_CS"/>
</dbReference>
<dbReference type="InterPro" id="IPR006140">
    <property type="entry name" value="D-isomer_DH_NAD-bd"/>
</dbReference>
<dbReference type="InterPro" id="IPR023756">
    <property type="entry name" value="Glyo/OHPyrv_Rdtase_B"/>
</dbReference>
<dbReference type="InterPro" id="IPR036291">
    <property type="entry name" value="NAD(P)-bd_dom_sf"/>
</dbReference>
<dbReference type="NCBIfam" id="NF011938">
    <property type="entry name" value="PRK15409.1"/>
    <property type="match status" value="1"/>
</dbReference>
<dbReference type="PANTHER" id="PTHR10996">
    <property type="entry name" value="2-HYDROXYACID DEHYDROGENASE-RELATED"/>
    <property type="match status" value="1"/>
</dbReference>
<dbReference type="PANTHER" id="PTHR10996:SF283">
    <property type="entry name" value="GLYOXYLATE_HYDROXYPYRUVATE REDUCTASE B"/>
    <property type="match status" value="1"/>
</dbReference>
<dbReference type="Pfam" id="PF00389">
    <property type="entry name" value="2-Hacid_dh"/>
    <property type="match status" value="1"/>
</dbReference>
<dbReference type="Pfam" id="PF02826">
    <property type="entry name" value="2-Hacid_dh_C"/>
    <property type="match status" value="1"/>
</dbReference>
<dbReference type="SUPFAM" id="SSF52283">
    <property type="entry name" value="Formate/glycerate dehydrogenase catalytic domain-like"/>
    <property type="match status" value="1"/>
</dbReference>
<dbReference type="SUPFAM" id="SSF51735">
    <property type="entry name" value="NAD(P)-binding Rossmann-fold domains"/>
    <property type="match status" value="1"/>
</dbReference>
<dbReference type="PROSITE" id="PS00670">
    <property type="entry name" value="D_2_HYDROXYACID_DH_2"/>
    <property type="match status" value="1"/>
</dbReference>
<dbReference type="PROSITE" id="PS00671">
    <property type="entry name" value="D_2_HYDROXYACID_DH_3"/>
    <property type="match status" value="1"/>
</dbReference>
<feature type="chain" id="PRO_0000348397" description="Glyoxylate/hydroxypyruvate reductase B">
    <location>
        <begin position="1"/>
        <end position="324"/>
    </location>
</feature>
<feature type="active site" evidence="1">
    <location>
        <position position="237"/>
    </location>
</feature>
<feature type="active site" evidence="1">
    <location>
        <position position="266"/>
    </location>
</feature>
<feature type="active site" description="Proton donor" evidence="1">
    <location>
        <position position="285"/>
    </location>
</feature>
<name>GHRB_SALTY</name>
<keyword id="KW-0963">Cytoplasm</keyword>
<keyword id="KW-0520">NAD</keyword>
<keyword id="KW-0521">NADP</keyword>
<keyword id="KW-0560">Oxidoreductase</keyword>
<keyword id="KW-1185">Reference proteome</keyword>
<reference key="1">
    <citation type="journal article" date="2001" name="Nature">
        <title>Complete genome sequence of Salmonella enterica serovar Typhimurium LT2.</title>
        <authorList>
            <person name="McClelland M."/>
            <person name="Sanderson K.E."/>
            <person name="Spieth J."/>
            <person name="Clifton S.W."/>
            <person name="Latreille P."/>
            <person name="Courtney L."/>
            <person name="Porwollik S."/>
            <person name="Ali J."/>
            <person name="Dante M."/>
            <person name="Du F."/>
            <person name="Hou S."/>
            <person name="Layman D."/>
            <person name="Leonard S."/>
            <person name="Nguyen C."/>
            <person name="Scott K."/>
            <person name="Holmes A."/>
            <person name="Grewal N."/>
            <person name="Mulvaney E."/>
            <person name="Ryan E."/>
            <person name="Sun H."/>
            <person name="Florea L."/>
            <person name="Miller W."/>
            <person name="Stoneking T."/>
            <person name="Nhan M."/>
            <person name="Waterston R."/>
            <person name="Wilson R.K."/>
        </authorList>
    </citation>
    <scope>NUCLEOTIDE SEQUENCE [LARGE SCALE GENOMIC DNA]</scope>
    <source>
        <strain>LT2 / SGSC1412 / ATCC 700720</strain>
    </source>
</reference>
<comment type="function">
    <text evidence="1">Catalyzes the NADPH-dependent reduction of glyoxylate and hydroxypyruvate into glycolate and glycerate, respectively.</text>
</comment>
<comment type="catalytic activity">
    <reaction evidence="1">
        <text>glycolate + NADP(+) = glyoxylate + NADPH + H(+)</text>
        <dbReference type="Rhea" id="RHEA:10992"/>
        <dbReference type="ChEBI" id="CHEBI:15378"/>
        <dbReference type="ChEBI" id="CHEBI:29805"/>
        <dbReference type="ChEBI" id="CHEBI:36655"/>
        <dbReference type="ChEBI" id="CHEBI:57783"/>
        <dbReference type="ChEBI" id="CHEBI:58349"/>
        <dbReference type="EC" id="1.1.1.79"/>
    </reaction>
</comment>
<comment type="catalytic activity">
    <reaction evidence="1">
        <text>(R)-glycerate + NAD(+) = 3-hydroxypyruvate + NADH + H(+)</text>
        <dbReference type="Rhea" id="RHEA:17905"/>
        <dbReference type="ChEBI" id="CHEBI:15378"/>
        <dbReference type="ChEBI" id="CHEBI:16659"/>
        <dbReference type="ChEBI" id="CHEBI:17180"/>
        <dbReference type="ChEBI" id="CHEBI:57540"/>
        <dbReference type="ChEBI" id="CHEBI:57945"/>
        <dbReference type="EC" id="1.1.1.81"/>
    </reaction>
</comment>
<comment type="catalytic activity">
    <reaction evidence="1">
        <text>(R)-glycerate + NADP(+) = 3-hydroxypyruvate + NADPH + H(+)</text>
        <dbReference type="Rhea" id="RHEA:18657"/>
        <dbReference type="ChEBI" id="CHEBI:15378"/>
        <dbReference type="ChEBI" id="CHEBI:16659"/>
        <dbReference type="ChEBI" id="CHEBI:17180"/>
        <dbReference type="ChEBI" id="CHEBI:57783"/>
        <dbReference type="ChEBI" id="CHEBI:58349"/>
        <dbReference type="EC" id="1.1.1.81"/>
    </reaction>
</comment>
<comment type="subunit">
    <text evidence="1">Homodimer.</text>
</comment>
<comment type="subcellular location">
    <subcellularLocation>
        <location evidence="1">Cytoplasm</location>
    </subcellularLocation>
</comment>
<comment type="similarity">
    <text evidence="1">Belongs to the D-isomer specific 2-hydroxyacid dehydrogenase family. GhrB subfamily.</text>
</comment>
<evidence type="ECO:0000255" key="1">
    <source>
        <dbReference type="HAMAP-Rule" id="MF_01667"/>
    </source>
</evidence>
<sequence>MKPSIILYKTLPDDLLHRLEAHFTVTQVPNLHPETVAQHAQAFASAQGLLGASETVNRALLEKMPALRAASTISVGYDNVEVDALTARKIVLMHTPAVLTETVADTVMALMLATARRVVDVAERVKAGEWTESIGPAWFGVDVHHKTLGIVGMGRIGMALAQRAHFGFTMPVLYHARRRHQEAEDRFNARYCDLDTLLQEADFVCVILPLTAETRHLFGATQFARMKSSAIFINAGRGPVVDENALIAALQNGEIYAAGLDVFEQEPLSVDSPLLNMSNVVAVPHIGSATHETRYNMMACAVDNLIDALQGKIEKNCVNPQAAG</sequence>
<gene>
    <name evidence="1" type="primary">ghrB</name>
    <name type="ordered locus">STM3646</name>
</gene>